<name>YBJL_SALG2</name>
<comment type="subcellular location">
    <subcellularLocation>
        <location evidence="1">Cell membrane</location>
        <topology evidence="1">Multi-pass membrane protein</topology>
    </subcellularLocation>
</comment>
<comment type="similarity">
    <text evidence="1">Belongs to the AAE transporter (TC 2.A.81) family. YbjL subfamily.</text>
</comment>
<organism>
    <name type="scientific">Salmonella gallinarum (strain 287/91 / NCTC 13346)</name>
    <dbReference type="NCBI Taxonomy" id="550538"/>
    <lineage>
        <taxon>Bacteria</taxon>
        <taxon>Pseudomonadati</taxon>
        <taxon>Pseudomonadota</taxon>
        <taxon>Gammaproteobacteria</taxon>
        <taxon>Enterobacterales</taxon>
        <taxon>Enterobacteriaceae</taxon>
        <taxon>Salmonella</taxon>
    </lineage>
</organism>
<reference key="1">
    <citation type="journal article" date="2008" name="Genome Res.">
        <title>Comparative genome analysis of Salmonella enteritidis PT4 and Salmonella gallinarum 287/91 provides insights into evolutionary and host adaptation pathways.</title>
        <authorList>
            <person name="Thomson N.R."/>
            <person name="Clayton D.J."/>
            <person name="Windhorst D."/>
            <person name="Vernikos G."/>
            <person name="Davidson S."/>
            <person name="Churcher C."/>
            <person name="Quail M.A."/>
            <person name="Stevens M."/>
            <person name="Jones M.A."/>
            <person name="Watson M."/>
            <person name="Barron A."/>
            <person name="Layton A."/>
            <person name="Pickard D."/>
            <person name="Kingsley R.A."/>
            <person name="Bignell A."/>
            <person name="Clark L."/>
            <person name="Harris B."/>
            <person name="Ormond D."/>
            <person name="Abdellah Z."/>
            <person name="Brooks K."/>
            <person name="Cherevach I."/>
            <person name="Chillingworth T."/>
            <person name="Woodward J."/>
            <person name="Norberczak H."/>
            <person name="Lord A."/>
            <person name="Arrowsmith C."/>
            <person name="Jagels K."/>
            <person name="Moule S."/>
            <person name="Mungall K."/>
            <person name="Saunders M."/>
            <person name="Whitehead S."/>
            <person name="Chabalgoity J.A."/>
            <person name="Maskell D."/>
            <person name="Humphreys T."/>
            <person name="Roberts M."/>
            <person name="Barrow P.A."/>
            <person name="Dougan G."/>
            <person name="Parkhill J."/>
        </authorList>
    </citation>
    <scope>NUCLEOTIDE SEQUENCE [LARGE SCALE GENOMIC DNA]</scope>
    <source>
        <strain>287/91 / NCTC 13346</strain>
    </source>
</reference>
<sequence>MNINVADLLNGNYILLLFVVLALGLCLGKLRLGSVQLGNSIGVLVVSLLLGQQHFSINTDALNLGFMLFIFCVGVEAGPNFFSIFFRDGKNYLMLALVMVGSALLIALGLGKLFGWDIGLTAGMLAGSMTSTPVLVGAGDTLRHSGIASTQLSSALDNLSLGYALTYLIGLVSLIVGARYLPKLQHQDLQTSAQQIARERGLDTDANRKVYLPVIRAYRVGPELVAWTDGKNLRELGIYRQTGCYIERIRRNGILANPDGDAVLQMGDEIALVGYPDAHARLDPSLRNGKEVFDRDLLDMRIVTEEIVVKNHNAVGRRLAQLKLTDHGCFLNRVIRSQIEMPIDDNVVLNKGDVLQVSGDARRVKTIADRIGFISIHSQVTDLLAFCAFFIIGLMIGMITFQFSNFSFGIGNAAGLLFAGIMLGFLRANHPTFGYIPQGALNMVKEFGLMVFMAGVGLSAGSGISNGLGAVGGQMLIAGLVVSLVPVVICFLFGAYVLRMNRALLFGAMMGARTCAPAMEIISDTARSNIPALGYAGTYAIANVLLTLAGTLIVIIWPGLG</sequence>
<accession>B5R857</accession>
<evidence type="ECO:0000255" key="1">
    <source>
        <dbReference type="HAMAP-Rule" id="MF_01015"/>
    </source>
</evidence>
<proteinExistence type="inferred from homology"/>
<keyword id="KW-1003">Cell membrane</keyword>
<keyword id="KW-0472">Membrane</keyword>
<keyword id="KW-0677">Repeat</keyword>
<keyword id="KW-0812">Transmembrane</keyword>
<keyword id="KW-1133">Transmembrane helix</keyword>
<keyword id="KW-0813">Transport</keyword>
<gene>
    <name evidence="1" type="primary">ybjL</name>
    <name type="ordered locus">SG0851</name>
</gene>
<feature type="chain" id="PRO_1000135192" description="Putative transport protein YbjL">
    <location>
        <begin position="1"/>
        <end position="561"/>
    </location>
</feature>
<feature type="transmembrane region" description="Helical" evidence="1">
    <location>
        <begin position="8"/>
        <end position="28"/>
    </location>
</feature>
<feature type="transmembrane region" description="Helical" evidence="1">
    <location>
        <begin position="32"/>
        <end position="52"/>
    </location>
</feature>
<feature type="transmembrane region" description="Helical" evidence="1">
    <location>
        <begin position="66"/>
        <end position="86"/>
    </location>
</feature>
<feature type="transmembrane region" description="Helical" evidence="1">
    <location>
        <begin position="94"/>
        <end position="114"/>
    </location>
</feature>
<feature type="transmembrane region" description="Helical" evidence="1">
    <location>
        <begin position="158"/>
        <end position="178"/>
    </location>
</feature>
<feature type="transmembrane region" description="Helical" evidence="1">
    <location>
        <begin position="383"/>
        <end position="403"/>
    </location>
</feature>
<feature type="transmembrane region" description="Helical" evidence="1">
    <location>
        <begin position="406"/>
        <end position="426"/>
    </location>
</feature>
<feature type="transmembrane region" description="Helical" evidence="1">
    <location>
        <begin position="447"/>
        <end position="467"/>
    </location>
</feature>
<feature type="transmembrane region" description="Helical" evidence="1">
    <location>
        <begin position="475"/>
        <end position="495"/>
    </location>
</feature>
<feature type="transmembrane region" description="Helical" evidence="1">
    <location>
        <begin position="540"/>
        <end position="560"/>
    </location>
</feature>
<feature type="domain" description="RCK C-terminal 1" evidence="1">
    <location>
        <begin position="200"/>
        <end position="288"/>
    </location>
</feature>
<feature type="domain" description="RCK C-terminal 2" evidence="1">
    <location>
        <begin position="292"/>
        <end position="373"/>
    </location>
</feature>
<protein>
    <recommendedName>
        <fullName evidence="1">Putative transport protein YbjL</fullName>
    </recommendedName>
</protein>
<dbReference type="EMBL" id="AM933173">
    <property type="protein sequence ID" value="CAR36744.1"/>
    <property type="molecule type" value="Genomic_DNA"/>
</dbReference>
<dbReference type="RefSeq" id="WP_001024854.1">
    <property type="nucleotide sequence ID" value="NC_011274.1"/>
</dbReference>
<dbReference type="SMR" id="B5R857"/>
<dbReference type="KEGG" id="seg:SG0851"/>
<dbReference type="HOGENOM" id="CLU_035023_2_2_6"/>
<dbReference type="Proteomes" id="UP000008321">
    <property type="component" value="Chromosome"/>
</dbReference>
<dbReference type="GO" id="GO:0005886">
    <property type="term" value="C:plasma membrane"/>
    <property type="evidence" value="ECO:0007669"/>
    <property type="project" value="UniProtKB-SubCell"/>
</dbReference>
<dbReference type="GO" id="GO:0008324">
    <property type="term" value="F:monoatomic cation transmembrane transporter activity"/>
    <property type="evidence" value="ECO:0007669"/>
    <property type="project" value="InterPro"/>
</dbReference>
<dbReference type="GO" id="GO:0006813">
    <property type="term" value="P:potassium ion transport"/>
    <property type="evidence" value="ECO:0007669"/>
    <property type="project" value="InterPro"/>
</dbReference>
<dbReference type="FunFam" id="3.30.70.1450:FF:000003">
    <property type="entry name" value="Putative transport protein YbjL"/>
    <property type="match status" value="1"/>
</dbReference>
<dbReference type="Gene3D" id="3.30.70.1450">
    <property type="entry name" value="Regulator of K+ conductance, C-terminal domain"/>
    <property type="match status" value="1"/>
</dbReference>
<dbReference type="HAMAP" id="MF_01015">
    <property type="entry name" value="YbjL"/>
    <property type="match status" value="1"/>
</dbReference>
<dbReference type="InterPro" id="IPR050144">
    <property type="entry name" value="AAE_transporter"/>
</dbReference>
<dbReference type="InterPro" id="IPR006037">
    <property type="entry name" value="RCK_C"/>
</dbReference>
<dbReference type="InterPro" id="IPR036721">
    <property type="entry name" value="RCK_C_sf"/>
</dbReference>
<dbReference type="InterPro" id="IPR023017">
    <property type="entry name" value="Transp_YbjL_put"/>
</dbReference>
<dbReference type="InterPro" id="IPR006512">
    <property type="entry name" value="YidE_YbjL"/>
</dbReference>
<dbReference type="NCBIfam" id="NF003440">
    <property type="entry name" value="PRK04972.1"/>
    <property type="match status" value="1"/>
</dbReference>
<dbReference type="NCBIfam" id="TIGR01625">
    <property type="entry name" value="YidE_YbjL_dupl"/>
    <property type="match status" value="2"/>
</dbReference>
<dbReference type="PANTHER" id="PTHR30445">
    <property type="entry name" value="K(+)_H(+) ANTIPORTER SUBUNIT KHTT"/>
    <property type="match status" value="1"/>
</dbReference>
<dbReference type="PANTHER" id="PTHR30445:SF10">
    <property type="entry name" value="TRANSPORT PROTEIN YBJL-RELATED"/>
    <property type="match status" value="1"/>
</dbReference>
<dbReference type="Pfam" id="PF06826">
    <property type="entry name" value="Asp-Al_Ex"/>
    <property type="match status" value="2"/>
</dbReference>
<dbReference type="Pfam" id="PF02080">
    <property type="entry name" value="TrkA_C"/>
    <property type="match status" value="2"/>
</dbReference>
<dbReference type="SUPFAM" id="SSF116726">
    <property type="entry name" value="TrkA C-terminal domain-like"/>
    <property type="match status" value="2"/>
</dbReference>
<dbReference type="PROSITE" id="PS51202">
    <property type="entry name" value="RCK_C"/>
    <property type="match status" value="2"/>
</dbReference>